<organism>
    <name type="scientific">Escherichia phage P2</name>
    <name type="common">Bacteriophage P2</name>
    <dbReference type="NCBI Taxonomy" id="2905681"/>
    <lineage>
        <taxon>Viruses</taxon>
        <taxon>Duplodnaviria</taxon>
        <taxon>Heunggongvirae</taxon>
        <taxon>Uroviricota</taxon>
        <taxon>Caudoviricetes</taxon>
        <taxon>Peduoviridae</taxon>
        <taxon>Peduovirus</taxon>
        <taxon>Peduovirus P2</taxon>
    </lineage>
</organism>
<organismHost>
    <name type="scientific">Enterobacteriaceae</name>
    <dbReference type="NCBI Taxonomy" id="543"/>
</organismHost>
<name>FIBH_BPP2</name>
<keyword id="KW-0945">Host-virus interaction</keyword>
<keyword id="KW-0426">Late protein</keyword>
<keyword id="KW-1185">Reference proteome</keyword>
<keyword id="KW-1161">Viral attachment to host cell</keyword>
<keyword id="KW-1230">Viral tail fiber protein</keyword>
<keyword id="KW-1227">Viral tail protein</keyword>
<keyword id="KW-0946">Virion</keyword>
<keyword id="KW-1160">Virus entry into host cell</keyword>
<comment type="subcellular location">
    <subcellularLocation>
        <location evidence="2">Virion</location>
    </subcellularLocation>
</comment>
<comment type="similarity">
    <text evidence="2">Belongs to the tail fiber family.</text>
</comment>
<accession>P26700</accession>
<feature type="chain" id="PRO_0000165252" description="Probable tail fiber protein">
    <location>
        <begin position="1"/>
        <end position="669"/>
    </location>
</feature>
<feature type="region of interest" description="Disordered" evidence="1">
    <location>
        <begin position="251"/>
        <end position="272"/>
    </location>
</feature>
<dbReference type="EMBL" id="AF063097">
    <property type="protein sequence ID" value="AAD03286.1"/>
    <property type="molecule type" value="Genomic_DNA"/>
</dbReference>
<dbReference type="PIR" id="B42291">
    <property type="entry name" value="B42291"/>
</dbReference>
<dbReference type="RefSeq" id="NP_046775.1">
    <property type="nucleotide sequence ID" value="NC_001895.1"/>
</dbReference>
<dbReference type="SMR" id="P26700"/>
<dbReference type="GeneID" id="77440810"/>
<dbReference type="KEGG" id="vg:77440810"/>
<dbReference type="Proteomes" id="UP000009092">
    <property type="component" value="Genome"/>
</dbReference>
<dbReference type="GO" id="GO:0098024">
    <property type="term" value="C:virus tail, fiber"/>
    <property type="evidence" value="ECO:0007669"/>
    <property type="project" value="UniProtKB-KW"/>
</dbReference>
<dbReference type="GO" id="GO:0046718">
    <property type="term" value="P:symbiont entry into host cell"/>
    <property type="evidence" value="ECO:0007669"/>
    <property type="project" value="UniProtKB-KW"/>
</dbReference>
<dbReference type="GO" id="GO:0019062">
    <property type="term" value="P:virion attachment to host cell"/>
    <property type="evidence" value="ECO:0007669"/>
    <property type="project" value="UniProtKB-KW"/>
</dbReference>
<dbReference type="InterPro" id="IPR048390">
    <property type="entry name" value="Gp34_trimer"/>
</dbReference>
<dbReference type="InterPro" id="IPR005068">
    <property type="entry name" value="Phage_lambda_Stf-r2"/>
</dbReference>
<dbReference type="InterPro" id="IPR051934">
    <property type="entry name" value="Phage_Tail_Fiber_Structural"/>
</dbReference>
<dbReference type="InterPro" id="IPR022225">
    <property type="entry name" value="Phage_tail_fibre_N"/>
</dbReference>
<dbReference type="PANTHER" id="PTHR35191">
    <property type="entry name" value="PROPHAGE SIDE TAIL FIBER PROTEIN HOMOLOG STFQ-RELATED"/>
    <property type="match status" value="1"/>
</dbReference>
<dbReference type="PANTHER" id="PTHR35191:SF1">
    <property type="entry name" value="PROPHAGE SIDE TAIL FIBER PROTEIN HOMOLOG STFQ-RELATED"/>
    <property type="match status" value="1"/>
</dbReference>
<dbReference type="Pfam" id="PF21446">
    <property type="entry name" value="Gp34_trimer"/>
    <property type="match status" value="1"/>
</dbReference>
<dbReference type="Pfam" id="PF03406">
    <property type="entry name" value="Phage_fiber_2"/>
    <property type="match status" value="2"/>
</dbReference>
<dbReference type="Pfam" id="PF12571">
    <property type="entry name" value="Phage_tail_fib"/>
    <property type="match status" value="1"/>
</dbReference>
<evidence type="ECO:0000256" key="1">
    <source>
        <dbReference type="SAM" id="MobiDB-lite"/>
    </source>
</evidence>
<evidence type="ECO:0000305" key="2"/>
<protein>
    <recommendedName>
        <fullName>Probable tail fiber protein</fullName>
    </recommendedName>
    <alternativeName>
        <fullName>GpH</fullName>
    </alternativeName>
</protein>
<gene>
    <name type="primary">H</name>
</gene>
<proteinExistence type="inferred from homology"/>
<reference key="1">
    <citation type="journal article" date="1992" name="J. Bacteriol.">
        <title>DNA sequences of the tail fiber genes of bacteriophage P2: evidence for horizontal transfer of tail fiber genes among unrelated bacteriophages.</title>
        <authorList>
            <person name="Haggaard-Ljungquist E."/>
            <person name="Halling C."/>
            <person name="Calendar R."/>
        </authorList>
    </citation>
    <scope>NUCLEOTIDE SEQUENCE [GENOMIC DNA]</scope>
</reference>
<sequence>MSIKFRTVITTAGAAKLAAATAPGRRKVGITTMAVGDGGGKLPVPDAGQTGLIHEVWRHALNKISQDKRNSNYIIAELVIPPEVGGFWMRELGLYDDAGTLIAVANMAESYKPALAEGSGRWQTCRMVIIVSSVASVELTIDTTTVMATQDYVDDKIAEHEQSRRHPDASLTAKGFTQLSSATNSTSETLAATPKAVKAAYDLANGKYTAQDATTARKGLVQLSSATNSTSETLAATPKAVKTVMDETNKKAPLNSPALTGTPTTPTARQGTNNTQIANTAFVMAAIAALVDSSPDALNTLNELAAALGNDPNFATTMTNALAGKQPKDATLTALAGLATAADRFPYFTGNDVASLATLTKVGRDILAKSTVAAVIEYLGLQETVNRAGNAVQKNGDTLSGGLTFENDSILAWIRNTDWAKIGFKNDADGDTDSYMWFETGDNGNEYFKWRSRQSTTTKDLMTLKWDALNILVNAVINGCFGVGTTNALGGSSIVLGDNDTGFKQNGDGILDVYANSQRVFRFQNGVAIAFKNIQAGDSKKFSLSSSNTSTKNITFNLWGASTRPVVAELGDEAGWHFYSQRNTDNSVIFAVNGQMQPSNWGNFDSRYVKDVRLGTRVVQLMARGGRYEKAGHTITGLRIIGEVDGDDEAIFRPIQKYINGTWYNVAQV</sequence>